<name>UBID_HAHCH</name>
<proteinExistence type="inferred from homology"/>
<reference key="1">
    <citation type="journal article" date="2005" name="Nucleic Acids Res.">
        <title>Genomic blueprint of Hahella chejuensis, a marine microbe producing an algicidal agent.</title>
        <authorList>
            <person name="Jeong H."/>
            <person name="Yim J.H."/>
            <person name="Lee C."/>
            <person name="Choi S.-H."/>
            <person name="Park Y.K."/>
            <person name="Yoon S.H."/>
            <person name="Hur C.-G."/>
            <person name="Kang H.-Y."/>
            <person name="Kim D."/>
            <person name="Lee H.H."/>
            <person name="Park K.H."/>
            <person name="Park S.-H."/>
            <person name="Park H.-S."/>
            <person name="Lee H.K."/>
            <person name="Oh T.K."/>
            <person name="Kim J.F."/>
        </authorList>
    </citation>
    <scope>NUCLEOTIDE SEQUENCE [LARGE SCALE GENOMIC DNA]</scope>
    <source>
        <strain>KCTC 2396</strain>
    </source>
</reference>
<organism>
    <name type="scientific">Hahella chejuensis (strain KCTC 2396)</name>
    <dbReference type="NCBI Taxonomy" id="349521"/>
    <lineage>
        <taxon>Bacteria</taxon>
        <taxon>Pseudomonadati</taxon>
        <taxon>Pseudomonadota</taxon>
        <taxon>Gammaproteobacteria</taxon>
        <taxon>Oceanospirillales</taxon>
        <taxon>Hahellaceae</taxon>
        <taxon>Hahella</taxon>
    </lineage>
</organism>
<feature type="chain" id="PRO_0000267667" description="3-octaprenyl-4-hydroxybenzoate carboxy-lyase">
    <location>
        <begin position="1"/>
        <end position="488"/>
    </location>
</feature>
<feature type="active site" description="Proton donor" evidence="1">
    <location>
        <position position="287"/>
    </location>
</feature>
<feature type="binding site" evidence="1">
    <location>
        <position position="172"/>
    </location>
    <ligand>
        <name>Mn(2+)</name>
        <dbReference type="ChEBI" id="CHEBI:29035"/>
    </ligand>
</feature>
<feature type="binding site" evidence="1">
    <location>
        <begin position="175"/>
        <end position="177"/>
    </location>
    <ligand>
        <name>prenylated FMN</name>
        <dbReference type="ChEBI" id="CHEBI:87746"/>
    </ligand>
</feature>
<feature type="binding site" evidence="1">
    <location>
        <begin position="189"/>
        <end position="191"/>
    </location>
    <ligand>
        <name>prenylated FMN</name>
        <dbReference type="ChEBI" id="CHEBI:87746"/>
    </ligand>
</feature>
<feature type="binding site" evidence="1">
    <location>
        <begin position="194"/>
        <end position="195"/>
    </location>
    <ligand>
        <name>prenylated FMN</name>
        <dbReference type="ChEBI" id="CHEBI:87746"/>
    </ligand>
</feature>
<feature type="binding site" evidence="1">
    <location>
        <position position="238"/>
    </location>
    <ligand>
        <name>Mn(2+)</name>
        <dbReference type="ChEBI" id="CHEBI:29035"/>
    </ligand>
</feature>
<comment type="function">
    <text evidence="1">Catalyzes the decarboxylation of 3-octaprenyl-4-hydroxy benzoate to 2-octaprenylphenol, an intermediate step in ubiquinone biosynthesis.</text>
</comment>
<comment type="catalytic activity">
    <reaction evidence="1">
        <text>a 4-hydroxy-3-(all-trans-polyprenyl)benzoate + H(+) = a 2-(all-trans-polyprenyl)phenol + CO2</text>
        <dbReference type="Rhea" id="RHEA:41680"/>
        <dbReference type="Rhea" id="RHEA-COMP:9514"/>
        <dbReference type="Rhea" id="RHEA-COMP:9516"/>
        <dbReference type="ChEBI" id="CHEBI:1269"/>
        <dbReference type="ChEBI" id="CHEBI:15378"/>
        <dbReference type="ChEBI" id="CHEBI:16526"/>
        <dbReference type="ChEBI" id="CHEBI:78396"/>
        <dbReference type="EC" id="4.1.1.98"/>
    </reaction>
</comment>
<comment type="cofactor">
    <cofactor evidence="1">
        <name>prenylated FMN</name>
        <dbReference type="ChEBI" id="CHEBI:87746"/>
    </cofactor>
    <text evidence="1">Binds 1 prenylated FMN per subunit.</text>
</comment>
<comment type="cofactor">
    <cofactor evidence="1">
        <name>Mn(2+)</name>
        <dbReference type="ChEBI" id="CHEBI:29035"/>
    </cofactor>
</comment>
<comment type="pathway">
    <text evidence="1">Cofactor biosynthesis; ubiquinone biosynthesis.</text>
</comment>
<comment type="subunit">
    <text evidence="1">Homohexamer.</text>
</comment>
<comment type="subcellular location">
    <subcellularLocation>
        <location evidence="1">Cell membrane</location>
        <topology evidence="1">Peripheral membrane protein</topology>
    </subcellularLocation>
</comment>
<comment type="similarity">
    <text evidence="1">Belongs to the UbiD family.</text>
</comment>
<comment type="sequence caution" evidence="2">
    <conflict type="erroneous initiation">
        <sequence resource="EMBL-CDS" id="ABC27199"/>
    </conflict>
</comment>
<sequence length="488" mass="54948">MQYRDLRDFIRILEQRGELKRITAEVDPHLEMTEICDRTLRREGPALLFENPRGYSIPVLGNLFGTPGRVALGMGAESVESLREIGKLLAFLKEPEPPKGLRDAWSKLPIFKQVMNMGPKEVSSASCQEVIIEGDDVDLYQYPIQTCWPGDAGPLVTWPLVITRGPNKARQNLGIYRQQLIGRNKLIMRWLSHRGGALDYREWREAHPMEPFPVAVALGADPATILGAVTPVPDTLSEYAFAGLLRGNKTEVVRCIGSDLQAPASAEIVLEGVIHPGEMAPEGPFGDHTGYYNEVDRFPVFTVERITQRKKPIYHSTYTGRPPDEPAVLGVALNEVFVPILQKQFPEIVDFYLPPEGCSYRMAVVTMKKQYPGHAKRVMMGVWSFLRQFMYTKFVIVTDDDVNARDWKDVIWAITTRMDPARDTVMVENTPIDYLDFASPVSGLGSKMGLDATNKWPGETQREWGRTIQMDADVKARVDDLWSQLGID</sequence>
<accession>Q2SQ75</accession>
<dbReference type="EC" id="4.1.1.98" evidence="1"/>
<dbReference type="EMBL" id="CP000155">
    <property type="protein sequence ID" value="ABC27199.1"/>
    <property type="status" value="ALT_INIT"/>
    <property type="molecule type" value="Genomic_DNA"/>
</dbReference>
<dbReference type="RefSeq" id="WP_041599123.1">
    <property type="nucleotide sequence ID" value="NC_007645.1"/>
</dbReference>
<dbReference type="SMR" id="Q2SQ75"/>
<dbReference type="STRING" id="349521.HCH_00286"/>
<dbReference type="KEGG" id="hch:HCH_00286"/>
<dbReference type="eggNOG" id="COG0043">
    <property type="taxonomic scope" value="Bacteria"/>
</dbReference>
<dbReference type="HOGENOM" id="CLU_023348_4_1_6"/>
<dbReference type="OrthoDB" id="9809841at2"/>
<dbReference type="UniPathway" id="UPA00232"/>
<dbReference type="Proteomes" id="UP000000238">
    <property type="component" value="Chromosome"/>
</dbReference>
<dbReference type="GO" id="GO:0005829">
    <property type="term" value="C:cytosol"/>
    <property type="evidence" value="ECO:0007669"/>
    <property type="project" value="TreeGrafter"/>
</dbReference>
<dbReference type="GO" id="GO:0005886">
    <property type="term" value="C:plasma membrane"/>
    <property type="evidence" value="ECO:0007669"/>
    <property type="project" value="UniProtKB-SubCell"/>
</dbReference>
<dbReference type="GO" id="GO:0008694">
    <property type="term" value="F:3-octaprenyl-4-hydroxybenzoate carboxy-lyase activity"/>
    <property type="evidence" value="ECO:0007669"/>
    <property type="project" value="UniProtKB-UniRule"/>
</dbReference>
<dbReference type="GO" id="GO:0046872">
    <property type="term" value="F:metal ion binding"/>
    <property type="evidence" value="ECO:0007669"/>
    <property type="project" value="UniProtKB-KW"/>
</dbReference>
<dbReference type="GO" id="GO:0006744">
    <property type="term" value="P:ubiquinone biosynthetic process"/>
    <property type="evidence" value="ECO:0007669"/>
    <property type="project" value="UniProtKB-UniRule"/>
</dbReference>
<dbReference type="FunFam" id="1.20.5.570:FF:000001">
    <property type="entry name" value="3-octaprenyl-4-hydroxybenzoate carboxy-lyase"/>
    <property type="match status" value="1"/>
</dbReference>
<dbReference type="FunFam" id="3.40.1670.10:FF:000001">
    <property type="entry name" value="3-octaprenyl-4-hydroxybenzoate carboxy-lyase"/>
    <property type="match status" value="1"/>
</dbReference>
<dbReference type="Gene3D" id="1.20.5.570">
    <property type="entry name" value="Single helix bin"/>
    <property type="match status" value="1"/>
</dbReference>
<dbReference type="Gene3D" id="3.40.1670.10">
    <property type="entry name" value="UbiD C-terminal domain-like"/>
    <property type="match status" value="1"/>
</dbReference>
<dbReference type="HAMAP" id="MF_01636">
    <property type="entry name" value="UbiD"/>
    <property type="match status" value="1"/>
</dbReference>
<dbReference type="InterPro" id="IPR002830">
    <property type="entry name" value="UbiD"/>
</dbReference>
<dbReference type="InterPro" id="IPR049381">
    <property type="entry name" value="UbiD-like_C"/>
</dbReference>
<dbReference type="InterPro" id="IPR049383">
    <property type="entry name" value="UbiD-like_N"/>
</dbReference>
<dbReference type="InterPro" id="IPR023677">
    <property type="entry name" value="UbiD_bacteria"/>
</dbReference>
<dbReference type="InterPro" id="IPR048304">
    <property type="entry name" value="UbiD_Rift_dom"/>
</dbReference>
<dbReference type="NCBIfam" id="NF008175">
    <property type="entry name" value="PRK10922.1"/>
    <property type="match status" value="1"/>
</dbReference>
<dbReference type="NCBIfam" id="TIGR00148">
    <property type="entry name" value="UbiD family decarboxylase"/>
    <property type="match status" value="1"/>
</dbReference>
<dbReference type="PANTHER" id="PTHR30108">
    <property type="entry name" value="3-OCTAPRENYL-4-HYDROXYBENZOATE CARBOXY-LYASE-RELATED"/>
    <property type="match status" value="1"/>
</dbReference>
<dbReference type="PANTHER" id="PTHR30108:SF17">
    <property type="entry name" value="FERULIC ACID DECARBOXYLASE 1"/>
    <property type="match status" value="1"/>
</dbReference>
<dbReference type="Pfam" id="PF01977">
    <property type="entry name" value="UbiD"/>
    <property type="match status" value="1"/>
</dbReference>
<dbReference type="Pfam" id="PF20696">
    <property type="entry name" value="UbiD_C"/>
    <property type="match status" value="1"/>
</dbReference>
<dbReference type="Pfam" id="PF20695">
    <property type="entry name" value="UbiD_N"/>
    <property type="match status" value="1"/>
</dbReference>
<dbReference type="SUPFAM" id="SSF50475">
    <property type="entry name" value="FMN-binding split barrel"/>
    <property type="match status" value="1"/>
</dbReference>
<dbReference type="SUPFAM" id="SSF143968">
    <property type="entry name" value="UbiD C-terminal domain-like"/>
    <property type="match status" value="1"/>
</dbReference>
<evidence type="ECO:0000255" key="1">
    <source>
        <dbReference type="HAMAP-Rule" id="MF_01636"/>
    </source>
</evidence>
<evidence type="ECO:0000305" key="2"/>
<gene>
    <name evidence="1" type="primary">ubiD</name>
    <name type="ordered locus">HCH_00286</name>
</gene>
<keyword id="KW-1003">Cell membrane</keyword>
<keyword id="KW-0210">Decarboxylase</keyword>
<keyword id="KW-0285">Flavoprotein</keyword>
<keyword id="KW-0288">FMN</keyword>
<keyword id="KW-0456">Lyase</keyword>
<keyword id="KW-0464">Manganese</keyword>
<keyword id="KW-0472">Membrane</keyword>
<keyword id="KW-0479">Metal-binding</keyword>
<keyword id="KW-1185">Reference proteome</keyword>
<keyword id="KW-0831">Ubiquinone biosynthesis</keyword>
<protein>
    <recommendedName>
        <fullName evidence="1">3-octaprenyl-4-hydroxybenzoate carboxy-lyase</fullName>
        <ecNumber evidence="1">4.1.1.98</ecNumber>
    </recommendedName>
    <alternativeName>
        <fullName evidence="1">Polyprenyl p-hydroxybenzoate decarboxylase</fullName>
    </alternativeName>
</protein>